<comment type="function">
    <text evidence="2">Involved in the anomeric conversion of L-rhamnose.</text>
</comment>
<comment type="catalytic activity">
    <reaction evidence="2">
        <text>alpha-L-rhamnose = beta-L-rhamnose</text>
        <dbReference type="Rhea" id="RHEA:25584"/>
        <dbReference type="ChEBI" id="CHEBI:27586"/>
        <dbReference type="ChEBI" id="CHEBI:27907"/>
        <dbReference type="EC" id="5.1.3.32"/>
    </reaction>
</comment>
<comment type="pathway">
    <text evidence="1">Carbohydrate degradation; L-rhamnose degradation.</text>
</comment>
<comment type="subunit">
    <text evidence="2">Homodimer.</text>
</comment>
<comment type="subcellular location">
    <subcellularLocation>
        <location evidence="3">Cytoplasm</location>
    </subcellularLocation>
</comment>
<comment type="similarity">
    <text evidence="3">Belongs to the rhamnose mutarotase family.</text>
</comment>
<protein>
    <recommendedName>
        <fullName>L-rhamnose mutarotase</fullName>
        <ecNumber evidence="2">5.1.3.32</ecNumber>
    </recommendedName>
    <alternativeName>
        <fullName>Rhamnose 1-epimerase</fullName>
    </alternativeName>
    <alternativeName>
        <fullName>Type-3 mutarotase</fullName>
    </alternativeName>
</protein>
<dbReference type="EC" id="5.1.3.32" evidence="2"/>
<dbReference type="EMBL" id="AF085687">
    <property type="protein sequence ID" value="AAQ92411.1"/>
    <property type="molecule type" value="Genomic_DNA"/>
</dbReference>
<dbReference type="PDB" id="2QLW">
    <property type="method" value="X-ray"/>
    <property type="resolution" value="1.60 A"/>
    <property type="chains" value="A/B=2-106"/>
</dbReference>
<dbReference type="PDB" id="2QLX">
    <property type="method" value="X-ray"/>
    <property type="resolution" value="2.00 A"/>
    <property type="chains" value="A/B=1-106"/>
</dbReference>
<dbReference type="PDBsum" id="2QLW"/>
<dbReference type="PDBsum" id="2QLX"/>
<dbReference type="SMR" id="Q7BSH1"/>
<dbReference type="BioCyc" id="MetaCyc:MONOMER-18536"/>
<dbReference type="BRENDA" id="5.1.3.32">
    <property type="organism ID" value="5343"/>
</dbReference>
<dbReference type="UniPathway" id="UPA00541"/>
<dbReference type="EvolutionaryTrace" id="Q7BSH1"/>
<dbReference type="GO" id="GO:0005737">
    <property type="term" value="C:cytoplasm"/>
    <property type="evidence" value="ECO:0007669"/>
    <property type="project" value="UniProtKB-SubCell"/>
</dbReference>
<dbReference type="GO" id="GO:0062192">
    <property type="term" value="F:L-rhamnose mutarotase activity"/>
    <property type="evidence" value="ECO:0007669"/>
    <property type="project" value="UniProtKB-EC"/>
</dbReference>
<dbReference type="GO" id="GO:0019301">
    <property type="term" value="P:rhamnose catabolic process"/>
    <property type="evidence" value="ECO:0007669"/>
    <property type="project" value="UniProtKB-UniPathway"/>
</dbReference>
<dbReference type="Gene3D" id="3.30.70.100">
    <property type="match status" value="1"/>
</dbReference>
<dbReference type="HAMAP" id="MF_01663">
    <property type="entry name" value="L_rham_rotase"/>
    <property type="match status" value="1"/>
</dbReference>
<dbReference type="InterPro" id="IPR011008">
    <property type="entry name" value="Dimeric_a/b-barrel"/>
</dbReference>
<dbReference type="InterPro" id="IPR013448">
    <property type="entry name" value="L-rhamnose_mutarotase"/>
</dbReference>
<dbReference type="InterPro" id="IPR008000">
    <property type="entry name" value="Rham/fucose_mutarotase"/>
</dbReference>
<dbReference type="NCBIfam" id="TIGR02625">
    <property type="entry name" value="YiiL_rotase"/>
    <property type="match status" value="1"/>
</dbReference>
<dbReference type="PANTHER" id="PTHR34389">
    <property type="entry name" value="L-RHAMNOSE MUTAROTASE"/>
    <property type="match status" value="1"/>
</dbReference>
<dbReference type="PANTHER" id="PTHR34389:SF2">
    <property type="entry name" value="L-RHAMNOSE MUTAROTASE"/>
    <property type="match status" value="1"/>
</dbReference>
<dbReference type="Pfam" id="PF05336">
    <property type="entry name" value="rhaM"/>
    <property type="match status" value="1"/>
</dbReference>
<dbReference type="SUPFAM" id="SSF54909">
    <property type="entry name" value="Dimeric alpha+beta barrel"/>
    <property type="match status" value="1"/>
</dbReference>
<reference key="1">
    <citation type="journal article" date="2004" name="J. Bacteriol.">
        <title>A genetic locus necessary for rhamnose uptake and catabolism in Rhizobium leguminosarum bv. trifolii.</title>
        <authorList>
            <person name="Richardson J.S."/>
            <person name="Hynes M.F."/>
            <person name="Oresnik I.J."/>
        </authorList>
    </citation>
    <scope>NUCLEOTIDE SEQUENCE [GENOMIC DNA]</scope>
    <scope>PATHWAY</scope>
    <source>
        <strain>Rlt100</strain>
    </source>
</reference>
<reference key="2">
    <citation type="journal article" date="2008" name="J. Bacteriol.">
        <title>RhaU of Rhizobium leguminosarum is a rhamnose mutarotase.</title>
        <authorList>
            <person name="Richardson J.S."/>
            <person name="Carpena X."/>
            <person name="Switala J."/>
            <person name="Perez-Luque R."/>
            <person name="Donald L.J."/>
            <person name="Loewen P.C."/>
            <person name="Oresnik I.J."/>
        </authorList>
    </citation>
    <scope>X-RAY CRYSTALLOGRAPHY (1.6 ANGSTROMS) IN COMPLEX WITH L-RHAMNOSE</scope>
    <scope>FUNCTION</scope>
    <scope>CATALYTIC ACTIVITY</scope>
    <scope>ACTIVE SITE</scope>
    <scope>REACTION MECHANISM</scope>
    <scope>SUBUNIT</scope>
    <scope>IDENTIFICATION BY MASS SPECTROMETRY</scope>
    <source>
        <strain>Rlt100</strain>
    </source>
</reference>
<evidence type="ECO:0000269" key="1">
    <source>
    </source>
</evidence>
<evidence type="ECO:0000269" key="2">
    <source>
    </source>
</evidence>
<evidence type="ECO:0000305" key="3"/>
<evidence type="ECO:0007829" key="4">
    <source>
        <dbReference type="PDB" id="2QLW"/>
    </source>
</evidence>
<proteinExistence type="evidence at protein level"/>
<name>RHAM_RHILT</name>
<accession>Q7BSH1</accession>
<geneLocation type="plasmid">
    <name>pRleW14-2c</name>
</geneLocation>
<feature type="chain" id="PRO_0000344593" description="L-rhamnose mutarotase">
    <location>
        <begin position="1"/>
        <end position="106"/>
    </location>
</feature>
<feature type="active site" description="Proton donor">
    <location>
        <position position="24"/>
    </location>
</feature>
<feature type="binding site">
    <location>
        <position position="20"/>
    </location>
    <ligand>
        <name>substrate</name>
    </ligand>
</feature>
<feature type="binding site">
    <location>
        <position position="43"/>
    </location>
    <ligand>
        <name>substrate</name>
    </ligand>
</feature>
<feature type="binding site">
    <location>
        <begin position="78"/>
        <end position="79"/>
    </location>
    <ligand>
        <name>substrate</name>
    </ligand>
</feature>
<feature type="strand" evidence="4">
    <location>
        <begin position="3"/>
        <end position="12"/>
    </location>
</feature>
<feature type="helix" evidence="4">
    <location>
        <begin position="17"/>
        <end position="25"/>
    </location>
</feature>
<feature type="helix" evidence="4">
    <location>
        <begin position="29"/>
        <end position="38"/>
    </location>
</feature>
<feature type="strand" evidence="4">
    <location>
        <begin position="41"/>
        <end position="48"/>
    </location>
</feature>
<feature type="turn" evidence="4">
    <location>
        <begin position="49"/>
        <end position="52"/>
    </location>
</feature>
<feature type="strand" evidence="4">
    <location>
        <begin position="53"/>
        <end position="61"/>
    </location>
</feature>
<feature type="helix" evidence="4">
    <location>
        <begin position="66"/>
        <end position="71"/>
    </location>
</feature>
<feature type="helix" evidence="4">
    <location>
        <begin position="73"/>
        <end position="82"/>
    </location>
</feature>
<feature type="helix" evidence="4">
    <location>
        <begin position="83"/>
        <end position="85"/>
    </location>
</feature>
<feature type="strand" evidence="4">
    <location>
        <begin position="100"/>
        <end position="105"/>
    </location>
</feature>
<organism>
    <name type="scientific">Rhizobium leguminosarum bv. trifolii</name>
    <dbReference type="NCBI Taxonomy" id="386"/>
    <lineage>
        <taxon>Bacteria</taxon>
        <taxon>Pseudomonadati</taxon>
        <taxon>Pseudomonadota</taxon>
        <taxon>Alphaproteobacteria</taxon>
        <taxon>Hyphomicrobiales</taxon>
        <taxon>Rhizobiaceae</taxon>
        <taxon>Rhizobium/Agrobacterium group</taxon>
        <taxon>Rhizobium</taxon>
    </lineage>
</organism>
<keyword id="KW-0002">3D-structure</keyword>
<keyword id="KW-0119">Carbohydrate metabolism</keyword>
<keyword id="KW-0963">Cytoplasm</keyword>
<keyword id="KW-0413">Isomerase</keyword>
<keyword id="KW-0614">Plasmid</keyword>
<keyword id="KW-0684">Rhamnose metabolism</keyword>
<gene>
    <name type="primary">rhaM</name>
    <name type="synonym">rhaU</name>
</gene>
<sequence>MTLEKHAFKMQLNPGMEAEYRKRHDEIWPELVDLLHQSGASDYSIHLDRETNTLFGVLTRPKDHTMASLPDHPVMKKWWAHMADIMATNPDNSPVQSDLVTLFHMP</sequence>